<evidence type="ECO:0000250" key="1"/>
<evidence type="ECO:0000255" key="2">
    <source>
        <dbReference type="HAMAP-Rule" id="MF_01158"/>
    </source>
</evidence>
<gene>
    <name evidence="2" type="primary">hda</name>
    <name type="ordered locus">YPA_2262</name>
</gene>
<reference key="1">
    <citation type="journal article" date="2006" name="J. Bacteriol.">
        <title>Complete genome sequence of Yersinia pestis strains Antiqua and Nepal516: evidence of gene reduction in an emerging pathogen.</title>
        <authorList>
            <person name="Chain P.S.G."/>
            <person name="Hu P."/>
            <person name="Malfatti S.A."/>
            <person name="Radnedge L."/>
            <person name="Larimer F."/>
            <person name="Vergez L.M."/>
            <person name="Worsham P."/>
            <person name="Chu M.C."/>
            <person name="Andersen G.L."/>
        </authorList>
    </citation>
    <scope>NUCLEOTIDE SEQUENCE [LARGE SCALE GENOMIC DNA]</scope>
    <source>
        <strain>Antiqua</strain>
    </source>
</reference>
<keyword id="KW-0235">DNA replication</keyword>
<keyword id="KW-0236">DNA replication inhibitor</keyword>
<proteinExistence type="inferred from homology"/>
<dbReference type="EMBL" id="CP000308">
    <property type="protein sequence ID" value="ABG14227.1"/>
    <property type="molecule type" value="Genomic_DNA"/>
</dbReference>
<dbReference type="RefSeq" id="WP_002228401.1">
    <property type="nucleotide sequence ID" value="NZ_CP009906.1"/>
</dbReference>
<dbReference type="SMR" id="Q1C5P5"/>
<dbReference type="GeneID" id="96666285"/>
<dbReference type="KEGG" id="ypa:YPA_2262"/>
<dbReference type="Proteomes" id="UP000001971">
    <property type="component" value="Chromosome"/>
</dbReference>
<dbReference type="GO" id="GO:0006270">
    <property type="term" value="P:DNA replication initiation"/>
    <property type="evidence" value="ECO:0007669"/>
    <property type="project" value="TreeGrafter"/>
</dbReference>
<dbReference type="GO" id="GO:0032297">
    <property type="term" value="P:negative regulation of DNA-templated DNA replication initiation"/>
    <property type="evidence" value="ECO:0007669"/>
    <property type="project" value="InterPro"/>
</dbReference>
<dbReference type="FunFam" id="1.10.8.60:FF:000024">
    <property type="entry name" value="DnaA regulatory inactivator Hda"/>
    <property type="match status" value="1"/>
</dbReference>
<dbReference type="FunFam" id="3.40.50.300:FF:000452">
    <property type="entry name" value="DnaA regulatory inactivator Hda"/>
    <property type="match status" value="1"/>
</dbReference>
<dbReference type="Gene3D" id="1.10.8.60">
    <property type="match status" value="1"/>
</dbReference>
<dbReference type="Gene3D" id="3.40.50.300">
    <property type="entry name" value="P-loop containing nucleotide triphosphate hydrolases"/>
    <property type="match status" value="1"/>
</dbReference>
<dbReference type="HAMAP" id="MF_01158">
    <property type="entry name" value="Hda"/>
    <property type="match status" value="1"/>
</dbReference>
<dbReference type="InterPro" id="IPR020591">
    <property type="entry name" value="Chromosome_initiator_DnaA-like"/>
</dbReference>
<dbReference type="InterPro" id="IPR013317">
    <property type="entry name" value="DnaA_dom"/>
</dbReference>
<dbReference type="InterPro" id="IPR017788">
    <property type="entry name" value="Hda"/>
</dbReference>
<dbReference type="InterPro" id="IPR022864">
    <property type="entry name" value="Hda_Enterobact"/>
</dbReference>
<dbReference type="InterPro" id="IPR055199">
    <property type="entry name" value="Hda_lid"/>
</dbReference>
<dbReference type="InterPro" id="IPR027417">
    <property type="entry name" value="P-loop_NTPase"/>
</dbReference>
<dbReference type="NCBIfam" id="TIGR03420">
    <property type="entry name" value="DnaA_homol_Hda"/>
    <property type="match status" value="1"/>
</dbReference>
<dbReference type="NCBIfam" id="NF005982">
    <property type="entry name" value="PRK08084.1"/>
    <property type="match status" value="1"/>
</dbReference>
<dbReference type="PANTHER" id="PTHR30050">
    <property type="entry name" value="CHROMOSOMAL REPLICATION INITIATOR PROTEIN DNAA"/>
    <property type="match status" value="1"/>
</dbReference>
<dbReference type="PANTHER" id="PTHR30050:SF5">
    <property type="entry name" value="DNAA REGULATORY INACTIVATOR HDA"/>
    <property type="match status" value="1"/>
</dbReference>
<dbReference type="Pfam" id="PF00308">
    <property type="entry name" value="Bac_DnaA"/>
    <property type="match status" value="1"/>
</dbReference>
<dbReference type="Pfam" id="PF22688">
    <property type="entry name" value="Hda_lid"/>
    <property type="match status" value="1"/>
</dbReference>
<dbReference type="PRINTS" id="PR00051">
    <property type="entry name" value="DNAA"/>
</dbReference>
<dbReference type="SUPFAM" id="SSF52540">
    <property type="entry name" value="P-loop containing nucleoside triphosphate hydrolases"/>
    <property type="match status" value="1"/>
</dbReference>
<feature type="chain" id="PRO_1000065571" description="DnaA regulatory inactivator Hda">
    <location>
        <begin position="1"/>
        <end position="235"/>
    </location>
</feature>
<sequence length="235" mass="26703">MLLNTPAQLSLPLYLPDDETFASFYPGENPSLLAAIQSAVHQPHGSYIYFWSREGGGRSHLLHAACAELSQQGEAVGYVPLDKRAYFIPEVLEGMEQLALVCIDNIECIAGDEQWEMAMFNLYNRIVETGRTRLLITGDRPPRQLNLGLPDLASRLDWGQIYKLQPLSDDEKLQALQLRAKLRGFELPEDVGRFLLKRLDREMRTLFMTLDQLDRASITAQRKLTIPFVKEILSL</sequence>
<name>HDA_YERPA</name>
<accession>Q1C5P5</accession>
<comment type="function">
    <text evidence="1">Mediates the interaction of DNA replication initiator protein DnaA with DNA polymerase subunit beta sliding clamp (dnaN). Stimulates hydrolysis of ATP-DnaA to ADP-DnaA, rendering DnaA inactive for reinitiation, a process called regulatory inhibition of DnaA or RIDA (By similarity).</text>
</comment>
<comment type="subunit">
    <text evidence="2">The active form seems to be an ADP-bound monomer. Forms the RIDA complex (regulatory inactivation of DnaA) of ATP-DnaA, ADP-Hda and the DNA-loaded beta sliding clamp (dnaN).</text>
</comment>
<comment type="similarity">
    <text evidence="2">Belongs to the DnaA family. HdA subfamily.</text>
</comment>
<organism>
    <name type="scientific">Yersinia pestis bv. Antiqua (strain Antiqua)</name>
    <dbReference type="NCBI Taxonomy" id="360102"/>
    <lineage>
        <taxon>Bacteria</taxon>
        <taxon>Pseudomonadati</taxon>
        <taxon>Pseudomonadota</taxon>
        <taxon>Gammaproteobacteria</taxon>
        <taxon>Enterobacterales</taxon>
        <taxon>Yersiniaceae</taxon>
        <taxon>Yersinia</taxon>
    </lineage>
</organism>
<protein>
    <recommendedName>
        <fullName evidence="2">DnaA regulatory inactivator Hda</fullName>
    </recommendedName>
</protein>